<evidence type="ECO:0000255" key="1">
    <source>
        <dbReference type="HAMAP-Rule" id="MF_00537"/>
    </source>
</evidence>
<evidence type="ECO:0000305" key="2"/>
<comment type="function">
    <text evidence="1">Binds 16S rRNA, required for the assembly of 30S particles and may also be responsible for determining the conformation of the 16S rRNA at the A site.</text>
</comment>
<comment type="subunit">
    <text evidence="1">Part of the 30S ribosomal subunit. Contacts proteins S3 and S10.</text>
</comment>
<comment type="similarity">
    <text evidence="1">Belongs to the universal ribosomal protein uS14 family.</text>
</comment>
<sequence length="101" mass="11796">MAKQSMKAREVKRVKLANKFYAQRIALKNTITNLKLSEEERWDAVLKLQIFPRDSSPSRQRNRCRQTGRPHAFLRKFGLSRIKVREAAMKGEIPGLKKASW</sequence>
<protein>
    <recommendedName>
        <fullName evidence="1">Small ribosomal subunit protein uS14</fullName>
    </recommendedName>
    <alternativeName>
        <fullName evidence="2">30S ribosomal protein S14</fullName>
    </alternativeName>
</protein>
<proteinExistence type="inferred from homology"/>
<keyword id="KW-0687">Ribonucleoprotein</keyword>
<keyword id="KW-0689">Ribosomal protein</keyword>
<keyword id="KW-0694">RNA-binding</keyword>
<keyword id="KW-0699">rRNA-binding</keyword>
<reference key="1">
    <citation type="journal article" date="2002" name="Science">
        <title>50 million years of genomic stasis in endosymbiotic bacteria.</title>
        <authorList>
            <person name="Tamas I."/>
            <person name="Klasson L."/>
            <person name="Canbaeck B."/>
            <person name="Naeslund A.K."/>
            <person name="Eriksson A.-S."/>
            <person name="Wernegreen J.J."/>
            <person name="Sandstroem J.P."/>
            <person name="Moran N.A."/>
            <person name="Andersson S.G.E."/>
        </authorList>
    </citation>
    <scope>NUCLEOTIDE SEQUENCE [LARGE SCALE GENOMIC DNA]</scope>
    <source>
        <strain>Sg</strain>
    </source>
</reference>
<name>RS14_BUCAP</name>
<accession>Q8K963</accession>
<dbReference type="EMBL" id="AE013218">
    <property type="protein sequence ID" value="AAM68035.1"/>
    <property type="molecule type" value="Genomic_DNA"/>
</dbReference>
<dbReference type="RefSeq" id="WP_011054001.1">
    <property type="nucleotide sequence ID" value="NC_004061.1"/>
</dbReference>
<dbReference type="SMR" id="Q8K963"/>
<dbReference type="STRING" id="198804.BUsg_492"/>
<dbReference type="GeneID" id="93003967"/>
<dbReference type="KEGG" id="bas:BUsg_492"/>
<dbReference type="eggNOG" id="COG0199">
    <property type="taxonomic scope" value="Bacteria"/>
</dbReference>
<dbReference type="HOGENOM" id="CLU_139869_0_1_6"/>
<dbReference type="Proteomes" id="UP000000416">
    <property type="component" value="Chromosome"/>
</dbReference>
<dbReference type="GO" id="GO:0005737">
    <property type="term" value="C:cytoplasm"/>
    <property type="evidence" value="ECO:0007669"/>
    <property type="project" value="UniProtKB-ARBA"/>
</dbReference>
<dbReference type="GO" id="GO:0015935">
    <property type="term" value="C:small ribosomal subunit"/>
    <property type="evidence" value="ECO:0007669"/>
    <property type="project" value="TreeGrafter"/>
</dbReference>
<dbReference type="GO" id="GO:0019843">
    <property type="term" value="F:rRNA binding"/>
    <property type="evidence" value="ECO:0007669"/>
    <property type="project" value="UniProtKB-UniRule"/>
</dbReference>
<dbReference type="GO" id="GO:0003735">
    <property type="term" value="F:structural constituent of ribosome"/>
    <property type="evidence" value="ECO:0007669"/>
    <property type="project" value="InterPro"/>
</dbReference>
<dbReference type="GO" id="GO:0006412">
    <property type="term" value="P:translation"/>
    <property type="evidence" value="ECO:0007669"/>
    <property type="project" value="UniProtKB-UniRule"/>
</dbReference>
<dbReference type="FunFam" id="1.10.287.1480:FF:000001">
    <property type="entry name" value="30S ribosomal protein S14"/>
    <property type="match status" value="1"/>
</dbReference>
<dbReference type="Gene3D" id="1.10.287.1480">
    <property type="match status" value="1"/>
</dbReference>
<dbReference type="HAMAP" id="MF_00537">
    <property type="entry name" value="Ribosomal_uS14_1"/>
    <property type="match status" value="1"/>
</dbReference>
<dbReference type="InterPro" id="IPR001209">
    <property type="entry name" value="Ribosomal_uS14"/>
</dbReference>
<dbReference type="InterPro" id="IPR023036">
    <property type="entry name" value="Ribosomal_uS14_bac/plastid"/>
</dbReference>
<dbReference type="InterPro" id="IPR018271">
    <property type="entry name" value="Ribosomal_uS14_CS"/>
</dbReference>
<dbReference type="NCBIfam" id="NF006477">
    <property type="entry name" value="PRK08881.1"/>
    <property type="match status" value="1"/>
</dbReference>
<dbReference type="PANTHER" id="PTHR19836">
    <property type="entry name" value="30S RIBOSOMAL PROTEIN S14"/>
    <property type="match status" value="1"/>
</dbReference>
<dbReference type="PANTHER" id="PTHR19836:SF19">
    <property type="entry name" value="SMALL RIBOSOMAL SUBUNIT PROTEIN US14M"/>
    <property type="match status" value="1"/>
</dbReference>
<dbReference type="Pfam" id="PF00253">
    <property type="entry name" value="Ribosomal_S14"/>
    <property type="match status" value="1"/>
</dbReference>
<dbReference type="SUPFAM" id="SSF57716">
    <property type="entry name" value="Glucocorticoid receptor-like (DNA-binding domain)"/>
    <property type="match status" value="1"/>
</dbReference>
<dbReference type="PROSITE" id="PS00527">
    <property type="entry name" value="RIBOSOMAL_S14"/>
    <property type="match status" value="1"/>
</dbReference>
<feature type="chain" id="PRO_0000130879" description="Small ribosomal subunit protein uS14">
    <location>
        <begin position="1"/>
        <end position="101"/>
    </location>
</feature>
<gene>
    <name evidence="1" type="primary">rpsN</name>
    <name type="ordered locus">BUsg_492</name>
</gene>
<organism>
    <name type="scientific">Buchnera aphidicola subsp. Schizaphis graminum (strain Sg)</name>
    <dbReference type="NCBI Taxonomy" id="198804"/>
    <lineage>
        <taxon>Bacteria</taxon>
        <taxon>Pseudomonadati</taxon>
        <taxon>Pseudomonadota</taxon>
        <taxon>Gammaproteobacteria</taxon>
        <taxon>Enterobacterales</taxon>
        <taxon>Erwiniaceae</taxon>
        <taxon>Buchnera</taxon>
    </lineage>
</organism>